<gene>
    <name evidence="1" type="primary">hisF</name>
    <name type="ordered locus">VIBHAR_01836</name>
</gene>
<reference key="1">
    <citation type="submission" date="2007-08" db="EMBL/GenBank/DDBJ databases">
        <authorList>
            <consortium name="The Vibrio harveyi Genome Sequencing Project"/>
            <person name="Bassler B."/>
            <person name="Clifton S.W."/>
            <person name="Fulton L."/>
            <person name="Delehaunty K."/>
            <person name="Fronick C."/>
            <person name="Harrison M."/>
            <person name="Markivic C."/>
            <person name="Fulton R."/>
            <person name="Tin-Wollam A.-M."/>
            <person name="Shah N."/>
            <person name="Pepin K."/>
            <person name="Nash W."/>
            <person name="Thiruvilangam P."/>
            <person name="Bhonagiri V."/>
            <person name="Waters C."/>
            <person name="Tu K.C."/>
            <person name="Irgon J."/>
            <person name="Wilson R.K."/>
        </authorList>
    </citation>
    <scope>NUCLEOTIDE SEQUENCE [LARGE SCALE GENOMIC DNA]</scope>
    <source>
        <strain>ATCC BAA-1116 / BB120</strain>
    </source>
</reference>
<accession>A7MX10</accession>
<dbReference type="EC" id="4.3.2.10" evidence="1"/>
<dbReference type="EMBL" id="CP000789">
    <property type="protein sequence ID" value="ABU70805.1"/>
    <property type="molecule type" value="Genomic_DNA"/>
</dbReference>
<dbReference type="RefSeq" id="WP_012127630.1">
    <property type="nucleotide sequence ID" value="NC_009783.1"/>
</dbReference>
<dbReference type="SMR" id="A7MX10"/>
<dbReference type="KEGG" id="vha:VIBHAR_01836"/>
<dbReference type="PATRIC" id="fig|338187.25.peg.840"/>
<dbReference type="UniPathway" id="UPA00031">
    <property type="reaction ID" value="UER00010"/>
</dbReference>
<dbReference type="Proteomes" id="UP000008152">
    <property type="component" value="Chromosome I"/>
</dbReference>
<dbReference type="GO" id="GO:0005737">
    <property type="term" value="C:cytoplasm"/>
    <property type="evidence" value="ECO:0007669"/>
    <property type="project" value="UniProtKB-SubCell"/>
</dbReference>
<dbReference type="GO" id="GO:0000107">
    <property type="term" value="F:imidazoleglycerol-phosphate synthase activity"/>
    <property type="evidence" value="ECO:0007669"/>
    <property type="project" value="UniProtKB-UniRule"/>
</dbReference>
<dbReference type="GO" id="GO:0016829">
    <property type="term" value="F:lyase activity"/>
    <property type="evidence" value="ECO:0007669"/>
    <property type="project" value="UniProtKB-KW"/>
</dbReference>
<dbReference type="GO" id="GO:0000105">
    <property type="term" value="P:L-histidine biosynthetic process"/>
    <property type="evidence" value="ECO:0007669"/>
    <property type="project" value="UniProtKB-UniRule"/>
</dbReference>
<dbReference type="CDD" id="cd04731">
    <property type="entry name" value="HisF"/>
    <property type="match status" value="1"/>
</dbReference>
<dbReference type="FunFam" id="3.20.20.70:FF:000006">
    <property type="entry name" value="Imidazole glycerol phosphate synthase subunit HisF"/>
    <property type="match status" value="1"/>
</dbReference>
<dbReference type="Gene3D" id="3.20.20.70">
    <property type="entry name" value="Aldolase class I"/>
    <property type="match status" value="1"/>
</dbReference>
<dbReference type="HAMAP" id="MF_01013">
    <property type="entry name" value="HisF"/>
    <property type="match status" value="1"/>
</dbReference>
<dbReference type="InterPro" id="IPR013785">
    <property type="entry name" value="Aldolase_TIM"/>
</dbReference>
<dbReference type="InterPro" id="IPR006062">
    <property type="entry name" value="His_biosynth"/>
</dbReference>
<dbReference type="InterPro" id="IPR004651">
    <property type="entry name" value="HisF"/>
</dbReference>
<dbReference type="InterPro" id="IPR050064">
    <property type="entry name" value="IGPS_HisA/HisF"/>
</dbReference>
<dbReference type="InterPro" id="IPR011060">
    <property type="entry name" value="RibuloseP-bd_barrel"/>
</dbReference>
<dbReference type="NCBIfam" id="TIGR00735">
    <property type="entry name" value="hisF"/>
    <property type="match status" value="1"/>
</dbReference>
<dbReference type="PANTHER" id="PTHR21235:SF2">
    <property type="entry name" value="IMIDAZOLE GLYCEROL PHOSPHATE SYNTHASE HISHF"/>
    <property type="match status" value="1"/>
</dbReference>
<dbReference type="PANTHER" id="PTHR21235">
    <property type="entry name" value="IMIDAZOLE GLYCEROL PHOSPHATE SYNTHASE SUBUNIT HISF/H IGP SYNTHASE SUBUNIT HISF/H"/>
    <property type="match status" value="1"/>
</dbReference>
<dbReference type="Pfam" id="PF00977">
    <property type="entry name" value="His_biosynth"/>
    <property type="match status" value="1"/>
</dbReference>
<dbReference type="SUPFAM" id="SSF51366">
    <property type="entry name" value="Ribulose-phoshate binding barrel"/>
    <property type="match status" value="1"/>
</dbReference>
<evidence type="ECO:0000255" key="1">
    <source>
        <dbReference type="HAMAP-Rule" id="MF_01013"/>
    </source>
</evidence>
<organism>
    <name type="scientific">Vibrio campbellii (strain ATCC BAA-1116)</name>
    <dbReference type="NCBI Taxonomy" id="2902295"/>
    <lineage>
        <taxon>Bacteria</taxon>
        <taxon>Pseudomonadati</taxon>
        <taxon>Pseudomonadota</taxon>
        <taxon>Gammaproteobacteria</taxon>
        <taxon>Vibrionales</taxon>
        <taxon>Vibrionaceae</taxon>
        <taxon>Vibrio</taxon>
    </lineage>
</organism>
<sequence length="257" mass="28399">MLAKRIIPCLDVRDGQVVKGVQFRNHEIIGDIVPLAQRYAEEGADELVFYDITASSDGRVVDKSWVARVAEVIDIPFCVAGGIKSAEDAARILEFGADKVSINSPALANPQLITDLADKFGVQCIVVGIDSYYDKETGKYQVYQFTGDEERTKATQWETRDWVQEVQKRGAGEIVLNMMNQDGVRNGYDIKQLNMVREVCNVPLIASGGAGAMEHFAEAYQKANVDGALAASVFHKQVINIGELKQYLKQQGIEVRL</sequence>
<name>HIS6_VIBC1</name>
<proteinExistence type="inferred from homology"/>
<comment type="function">
    <text evidence="1">IGPS catalyzes the conversion of PRFAR and glutamine to IGP, AICAR and glutamate. The HisF subunit catalyzes the cyclization activity that produces IGP and AICAR from PRFAR using the ammonia provided by the HisH subunit.</text>
</comment>
<comment type="catalytic activity">
    <reaction evidence="1">
        <text>5-[(5-phospho-1-deoxy-D-ribulos-1-ylimino)methylamino]-1-(5-phospho-beta-D-ribosyl)imidazole-4-carboxamide + L-glutamine = D-erythro-1-(imidazol-4-yl)glycerol 3-phosphate + 5-amino-1-(5-phospho-beta-D-ribosyl)imidazole-4-carboxamide + L-glutamate + H(+)</text>
        <dbReference type="Rhea" id="RHEA:24793"/>
        <dbReference type="ChEBI" id="CHEBI:15378"/>
        <dbReference type="ChEBI" id="CHEBI:29985"/>
        <dbReference type="ChEBI" id="CHEBI:58278"/>
        <dbReference type="ChEBI" id="CHEBI:58359"/>
        <dbReference type="ChEBI" id="CHEBI:58475"/>
        <dbReference type="ChEBI" id="CHEBI:58525"/>
        <dbReference type="EC" id="4.3.2.10"/>
    </reaction>
</comment>
<comment type="pathway">
    <text evidence="1">Amino-acid biosynthesis; L-histidine biosynthesis; L-histidine from 5-phospho-alpha-D-ribose 1-diphosphate: step 5/9.</text>
</comment>
<comment type="subunit">
    <text evidence="1">Heterodimer of HisH and HisF.</text>
</comment>
<comment type="subcellular location">
    <subcellularLocation>
        <location evidence="1">Cytoplasm</location>
    </subcellularLocation>
</comment>
<comment type="similarity">
    <text evidence="1">Belongs to the HisA/HisF family.</text>
</comment>
<keyword id="KW-0028">Amino-acid biosynthesis</keyword>
<keyword id="KW-0963">Cytoplasm</keyword>
<keyword id="KW-0368">Histidine biosynthesis</keyword>
<keyword id="KW-0456">Lyase</keyword>
<protein>
    <recommendedName>
        <fullName evidence="1">Imidazole glycerol phosphate synthase subunit HisF</fullName>
        <ecNumber evidence="1">4.3.2.10</ecNumber>
    </recommendedName>
    <alternativeName>
        <fullName evidence="1">IGP synthase cyclase subunit</fullName>
    </alternativeName>
    <alternativeName>
        <fullName evidence="1">IGP synthase subunit HisF</fullName>
    </alternativeName>
    <alternativeName>
        <fullName evidence="1">ImGP synthase subunit HisF</fullName>
        <shortName evidence="1">IGPS subunit HisF</shortName>
    </alternativeName>
</protein>
<feature type="chain" id="PRO_1000063172" description="Imidazole glycerol phosphate synthase subunit HisF">
    <location>
        <begin position="1"/>
        <end position="257"/>
    </location>
</feature>
<feature type="active site" evidence="1">
    <location>
        <position position="11"/>
    </location>
</feature>
<feature type="active site" evidence="1">
    <location>
        <position position="130"/>
    </location>
</feature>